<comment type="function">
    <text evidence="1">Mating type proteins are sequence specific DNA-binding proteins that act as master switches in yeast differentiation by controlling gene expression in a cell type-specific fashion. Transcriptional corepressor that acts in conjunction with A1 to repress transcription of haploid-specific genes (By similarity).</text>
</comment>
<comment type="subunit">
    <text evidence="1">Forms a heterodimer with A1.</text>
</comment>
<comment type="subcellular location">
    <subcellularLocation>
        <location evidence="1">Nucleus</location>
    </subcellularLocation>
</comment>
<comment type="developmental stage">
    <text>Only present in B-cells and in A/B diploid cells.</text>
</comment>
<comment type="similarity">
    <text evidence="2">Belongs to the TALE/M-ATYP homeobox family.</text>
</comment>
<name>MTAL2_YARLI</name>
<sequence length="367" mass="42180">MKETRDLLFYNENSIDFNFSPEEMDTHQMMCVNNDSQQDTSFLTATTCIFDFQKDIYDDQNLMSFDPFFPQQRDMALWIASVGNGAIDWSTKPQLTLSKKIPDVVNEKGEEITPADLQRHYADKHVAKLPDHSCDLYYLLFKHAKFEATTLRIPLSLLNDNGTGALGPFDEIRSLTDEEQRLLTLLKTISHYSWVTKHATKDCTGQLLDLCKEGLQLVESIQVNKTFNGVILHILVAYFGRRSTALRDEFQLHKLFLEQRLDIELEILAQHGGADAIDSEKLRKVKKLSELWEWFNAIPYNHHPSVSQIEFIASQIGEKVSFVKSWVANKRRTGAKKRSKKPAPSTQIRPALKVFLEKKPFVSRQVV</sequence>
<keyword id="KW-0238">DNA-binding</keyword>
<keyword id="KW-0371">Homeobox</keyword>
<keyword id="KW-0539">Nucleus</keyword>
<keyword id="KW-1185">Reference proteome</keyword>
<keyword id="KW-0678">Repressor</keyword>
<keyword id="KW-0804">Transcription</keyword>
<keyword id="KW-0805">Transcription regulation</keyword>
<feature type="chain" id="PRO_0000049184" description="Mating-type protein ALPHA2">
    <location>
        <begin position="1"/>
        <end position="367"/>
    </location>
</feature>
<feature type="DNA-binding region" description="Homeobox; TALE-type">
    <location>
        <begin position="273"/>
        <end position="338"/>
    </location>
</feature>
<accession>Q707Y0</accession>
<accession>Q6CCQ6</accession>
<proteinExistence type="evidence at transcript level"/>
<organism>
    <name type="scientific">Yarrowia lipolytica (strain CLIB 122 / E 150)</name>
    <name type="common">Yeast</name>
    <name type="synonym">Candida lipolytica</name>
    <dbReference type="NCBI Taxonomy" id="284591"/>
    <lineage>
        <taxon>Eukaryota</taxon>
        <taxon>Fungi</taxon>
        <taxon>Dikarya</taxon>
        <taxon>Ascomycota</taxon>
        <taxon>Saccharomycotina</taxon>
        <taxon>Dipodascomycetes</taxon>
        <taxon>Dipodascales</taxon>
        <taxon>Dipodascales incertae sedis</taxon>
        <taxon>Yarrowia</taxon>
    </lineage>
</organism>
<gene>
    <name type="primary">MATB2</name>
    <name type="synonym">YlMATB2</name>
    <name type="ordered locus">YALI0C07458g</name>
</gene>
<dbReference type="EMBL" id="AJ617307">
    <property type="protein sequence ID" value="CAE84425.1"/>
    <property type="molecule type" value="Genomic_DNA"/>
</dbReference>
<dbReference type="EMBL" id="CR382129">
    <property type="protein sequence ID" value="CAG81859.1"/>
    <property type="molecule type" value="Genomic_DNA"/>
</dbReference>
<dbReference type="RefSeq" id="XP_501556.1">
    <property type="nucleotide sequence ID" value="XM_501556.1"/>
</dbReference>
<dbReference type="SMR" id="Q707Y0"/>
<dbReference type="EnsemblFungi" id="CAG81859">
    <property type="protein sequence ID" value="CAG81859"/>
    <property type="gene ID" value="YALI0_C07458g"/>
</dbReference>
<dbReference type="VEuPathDB" id="FungiDB:YALI0_C07458g"/>
<dbReference type="HOGENOM" id="CLU_754799_0_0_1"/>
<dbReference type="InParanoid" id="Q707Y0"/>
<dbReference type="Proteomes" id="UP000001300">
    <property type="component" value="Chromosome C"/>
</dbReference>
<dbReference type="GO" id="GO:0005634">
    <property type="term" value="C:nucleus"/>
    <property type="evidence" value="ECO:0007669"/>
    <property type="project" value="UniProtKB-SubCell"/>
</dbReference>
<dbReference type="GO" id="GO:0003677">
    <property type="term" value="F:DNA binding"/>
    <property type="evidence" value="ECO:0007669"/>
    <property type="project" value="UniProtKB-KW"/>
</dbReference>
<dbReference type="CDD" id="cd00086">
    <property type="entry name" value="homeodomain"/>
    <property type="match status" value="1"/>
</dbReference>
<dbReference type="Gene3D" id="1.10.10.60">
    <property type="entry name" value="Homeodomain-like"/>
    <property type="match status" value="1"/>
</dbReference>
<dbReference type="InterPro" id="IPR001356">
    <property type="entry name" value="HD"/>
</dbReference>
<dbReference type="InterPro" id="IPR009057">
    <property type="entry name" value="Homeodomain-like_sf"/>
</dbReference>
<dbReference type="SUPFAM" id="SSF46689">
    <property type="entry name" value="Homeodomain-like"/>
    <property type="match status" value="1"/>
</dbReference>
<protein>
    <recommendedName>
        <fullName>Mating-type protein ALPHA2</fullName>
    </recommendedName>
    <alternativeName>
        <fullName>MATB2 transcription factor</fullName>
    </alternativeName>
</protein>
<reference key="1">
    <citation type="journal article" date="2004" name="Proc. Natl. Acad. Sci. U.S.A.">
        <title>Evolution of the MAT locus and its Ho endonuclease in yeast species.</title>
        <authorList>
            <person name="Butler G."/>
            <person name="Kenny C."/>
            <person name="Fagan A."/>
            <person name="Kurischko C."/>
            <person name="Gaillardin C."/>
            <person name="Wolfe K.H."/>
        </authorList>
    </citation>
    <scope>NUCLEOTIDE SEQUENCE [GENOMIC DNA]</scope>
    <source>
        <strain>ATCC 20460 / W29 / CBS 7504 / IFP29</strain>
    </source>
</reference>
<reference key="2">
    <citation type="journal article" date="2004" name="Nature">
        <title>Genome evolution in yeasts.</title>
        <authorList>
            <person name="Dujon B."/>
            <person name="Sherman D."/>
            <person name="Fischer G."/>
            <person name="Durrens P."/>
            <person name="Casaregola S."/>
            <person name="Lafontaine I."/>
            <person name="de Montigny J."/>
            <person name="Marck C."/>
            <person name="Neuveglise C."/>
            <person name="Talla E."/>
            <person name="Goffard N."/>
            <person name="Frangeul L."/>
            <person name="Aigle M."/>
            <person name="Anthouard V."/>
            <person name="Babour A."/>
            <person name="Barbe V."/>
            <person name="Barnay S."/>
            <person name="Blanchin S."/>
            <person name="Beckerich J.-M."/>
            <person name="Beyne E."/>
            <person name="Bleykasten C."/>
            <person name="Boisrame A."/>
            <person name="Boyer J."/>
            <person name="Cattolico L."/>
            <person name="Confanioleri F."/>
            <person name="de Daruvar A."/>
            <person name="Despons L."/>
            <person name="Fabre E."/>
            <person name="Fairhead C."/>
            <person name="Ferry-Dumazet H."/>
            <person name="Groppi A."/>
            <person name="Hantraye F."/>
            <person name="Hennequin C."/>
            <person name="Jauniaux N."/>
            <person name="Joyet P."/>
            <person name="Kachouri R."/>
            <person name="Kerrest A."/>
            <person name="Koszul R."/>
            <person name="Lemaire M."/>
            <person name="Lesur I."/>
            <person name="Ma L."/>
            <person name="Muller H."/>
            <person name="Nicaud J.-M."/>
            <person name="Nikolski M."/>
            <person name="Oztas S."/>
            <person name="Ozier-Kalogeropoulos O."/>
            <person name="Pellenz S."/>
            <person name="Potier S."/>
            <person name="Richard G.-F."/>
            <person name="Straub M.-L."/>
            <person name="Suleau A."/>
            <person name="Swennen D."/>
            <person name="Tekaia F."/>
            <person name="Wesolowski-Louvel M."/>
            <person name="Westhof E."/>
            <person name="Wirth B."/>
            <person name="Zeniou-Meyer M."/>
            <person name="Zivanovic Y."/>
            <person name="Bolotin-Fukuhara M."/>
            <person name="Thierry A."/>
            <person name="Bouchier C."/>
            <person name="Caudron B."/>
            <person name="Scarpelli C."/>
            <person name="Gaillardin C."/>
            <person name="Weissenbach J."/>
            <person name="Wincker P."/>
            <person name="Souciet J.-L."/>
        </authorList>
    </citation>
    <scope>NUCLEOTIDE SEQUENCE [LARGE SCALE GENOMIC DNA]</scope>
    <source>
        <strain>CLIB 122 / E 150</strain>
    </source>
</reference>
<evidence type="ECO:0000250" key="1"/>
<evidence type="ECO:0000305" key="2"/>